<evidence type="ECO:0000255" key="1">
    <source>
        <dbReference type="HAMAP-Rule" id="MF_01100"/>
    </source>
</evidence>
<evidence type="ECO:0000255" key="2">
    <source>
        <dbReference type="PROSITE-ProRule" id="PRU01175"/>
    </source>
</evidence>
<proteinExistence type="inferred from homology"/>
<organism>
    <name type="scientific">Salmonella paratyphi A (strain ATCC 9150 / SARB42)</name>
    <dbReference type="NCBI Taxonomy" id="295319"/>
    <lineage>
        <taxon>Bacteria</taxon>
        <taxon>Pseudomonadati</taxon>
        <taxon>Pseudomonadota</taxon>
        <taxon>Gammaproteobacteria</taxon>
        <taxon>Enterobacterales</taxon>
        <taxon>Enterobacteriaceae</taxon>
        <taxon>Salmonella</taxon>
    </lineage>
</organism>
<name>5DNU_SALPA</name>
<accession>Q3V7K9</accession>
<comment type="function">
    <text evidence="1">Catalyzes the strictly specific dephosphorylation of 2'-deoxyribonucleoside 5'-monophosphates.</text>
</comment>
<comment type="catalytic activity">
    <reaction evidence="1">
        <text>a 2'-deoxyribonucleoside 5'-phosphate + H2O = a 2'-deoxyribonucleoside + phosphate</text>
        <dbReference type="Rhea" id="RHEA:36167"/>
        <dbReference type="ChEBI" id="CHEBI:15377"/>
        <dbReference type="ChEBI" id="CHEBI:18274"/>
        <dbReference type="ChEBI" id="CHEBI:43474"/>
        <dbReference type="ChEBI" id="CHEBI:65317"/>
        <dbReference type="EC" id="3.1.3.89"/>
    </reaction>
</comment>
<comment type="cofactor">
    <cofactor evidence="1">
        <name>a divalent metal cation</name>
        <dbReference type="ChEBI" id="CHEBI:60240"/>
    </cofactor>
</comment>
<comment type="subunit">
    <text evidence="1">Homodimer.</text>
</comment>
<comment type="subcellular location">
    <subcellularLocation>
        <location evidence="1">Cytoplasm</location>
    </subcellularLocation>
</comment>
<comment type="similarity">
    <text evidence="1">Belongs to the 5DNU family.</text>
</comment>
<protein>
    <recommendedName>
        <fullName evidence="1">5'-deoxynucleotidase YfbR</fullName>
        <ecNumber evidence="1">3.1.3.89</ecNumber>
    </recommendedName>
    <alternativeName>
        <fullName evidence="1">5'-deoxyribonucleotidase</fullName>
    </alternativeName>
    <alternativeName>
        <fullName evidence="1">Nucleoside 5'-monophosphate phosphohydrolase</fullName>
    </alternativeName>
</protein>
<reference key="1">
    <citation type="journal article" date="2004" name="Nat. Genet.">
        <title>Comparison of genome degradation in Paratyphi A and Typhi, human-restricted serovars of Salmonella enterica that cause typhoid.</title>
        <authorList>
            <person name="McClelland M."/>
            <person name="Sanderson K.E."/>
            <person name="Clifton S.W."/>
            <person name="Latreille P."/>
            <person name="Porwollik S."/>
            <person name="Sabo A."/>
            <person name="Meyer R."/>
            <person name="Bieri T."/>
            <person name="Ozersky P."/>
            <person name="McLellan M."/>
            <person name="Harkins C.R."/>
            <person name="Wang C."/>
            <person name="Nguyen C."/>
            <person name="Berghoff A."/>
            <person name="Elliott G."/>
            <person name="Kohlberg S."/>
            <person name="Strong C."/>
            <person name="Du F."/>
            <person name="Carter J."/>
            <person name="Kremizki C."/>
            <person name="Layman D."/>
            <person name="Leonard S."/>
            <person name="Sun H."/>
            <person name="Fulton L."/>
            <person name="Nash W."/>
            <person name="Miner T."/>
            <person name="Minx P."/>
            <person name="Delehaunty K."/>
            <person name="Fronick C."/>
            <person name="Magrini V."/>
            <person name="Nhan M."/>
            <person name="Warren W."/>
            <person name="Florea L."/>
            <person name="Spieth J."/>
            <person name="Wilson R.K."/>
        </authorList>
    </citation>
    <scope>NUCLEOTIDE SEQUENCE [LARGE SCALE GENOMIC DNA]</scope>
    <source>
        <strain>ATCC 9150 / SARB42</strain>
    </source>
</reference>
<keyword id="KW-0963">Cytoplasm</keyword>
<keyword id="KW-0378">Hydrolase</keyword>
<keyword id="KW-0479">Metal-binding</keyword>
<keyword id="KW-0547">Nucleotide-binding</keyword>
<sequence length="199" mass="22697">MKQSHFFAHLSRMKLINRWPLMRNVRTENVSEHSLQVAMVAHALAAIKNRKFGGQLNAERIALLAMYHDASEVLTGDLPTPVKYFNSQIAQEYKAIEKIAQQKLVDMAPDELRDIFAPLIDENAWSEEEQAIVKQADALCAYLKCLEELSAGNNEFGLAKTRLEKTLELRRSQEMDYFMAVFVPSFHLSLDEISQDSPL</sequence>
<dbReference type="EC" id="3.1.3.89" evidence="1"/>
<dbReference type="EMBL" id="CP000026">
    <property type="protein sequence ID" value="AAV76534.1"/>
    <property type="molecule type" value="Genomic_DNA"/>
</dbReference>
<dbReference type="RefSeq" id="WP_000813882.1">
    <property type="nucleotide sequence ID" value="NC_006511.1"/>
</dbReference>
<dbReference type="SMR" id="Q3V7K9"/>
<dbReference type="KEGG" id="spt:SPA0532"/>
<dbReference type="HOGENOM" id="CLU_084784_0_0_6"/>
<dbReference type="Proteomes" id="UP000008185">
    <property type="component" value="Chromosome"/>
</dbReference>
<dbReference type="GO" id="GO:0005737">
    <property type="term" value="C:cytoplasm"/>
    <property type="evidence" value="ECO:0007669"/>
    <property type="project" value="UniProtKB-SubCell"/>
</dbReference>
<dbReference type="GO" id="GO:0002953">
    <property type="term" value="F:5'-deoxynucleotidase activity"/>
    <property type="evidence" value="ECO:0007669"/>
    <property type="project" value="UniProtKB-EC"/>
</dbReference>
<dbReference type="GO" id="GO:0046872">
    <property type="term" value="F:metal ion binding"/>
    <property type="evidence" value="ECO:0007669"/>
    <property type="project" value="UniProtKB-KW"/>
</dbReference>
<dbReference type="GO" id="GO:0000166">
    <property type="term" value="F:nucleotide binding"/>
    <property type="evidence" value="ECO:0007669"/>
    <property type="project" value="UniProtKB-KW"/>
</dbReference>
<dbReference type="FunFam" id="1.10.3210.10:FF:000002">
    <property type="entry name" value="Nucleotidase YfbR"/>
    <property type="match status" value="1"/>
</dbReference>
<dbReference type="Gene3D" id="1.10.3210.10">
    <property type="entry name" value="Hypothetical protein af1432"/>
    <property type="match status" value="1"/>
</dbReference>
<dbReference type="HAMAP" id="MF_01100">
    <property type="entry name" value="5DNU"/>
    <property type="match status" value="1"/>
</dbReference>
<dbReference type="InterPro" id="IPR003607">
    <property type="entry name" value="HD/PDEase_dom"/>
</dbReference>
<dbReference type="InterPro" id="IPR006674">
    <property type="entry name" value="HD_domain"/>
</dbReference>
<dbReference type="InterPro" id="IPR022971">
    <property type="entry name" value="YfbR"/>
</dbReference>
<dbReference type="InterPro" id="IPR039356">
    <property type="entry name" value="YfbR/HDDC2"/>
</dbReference>
<dbReference type="NCBIfam" id="NF003009">
    <property type="entry name" value="PRK03826.1"/>
    <property type="match status" value="1"/>
</dbReference>
<dbReference type="PANTHER" id="PTHR11845">
    <property type="entry name" value="5'-DEOXYNUCLEOTIDASE HDDC2"/>
    <property type="match status" value="1"/>
</dbReference>
<dbReference type="PANTHER" id="PTHR11845:SF13">
    <property type="entry name" value="5'-DEOXYNUCLEOTIDASE HDDC2"/>
    <property type="match status" value="1"/>
</dbReference>
<dbReference type="Pfam" id="PF12917">
    <property type="entry name" value="YfbR-like"/>
    <property type="match status" value="1"/>
</dbReference>
<dbReference type="SMART" id="SM00471">
    <property type="entry name" value="HDc"/>
    <property type="match status" value="1"/>
</dbReference>
<dbReference type="SUPFAM" id="SSF109604">
    <property type="entry name" value="HD-domain/PDEase-like"/>
    <property type="match status" value="1"/>
</dbReference>
<dbReference type="PROSITE" id="PS51831">
    <property type="entry name" value="HD"/>
    <property type="match status" value="1"/>
</dbReference>
<gene>
    <name evidence="1" type="primary">yfbR</name>
    <name type="ordered locus">SPA0532</name>
</gene>
<feature type="chain" id="PRO_1000064957" description="5'-deoxynucleotidase YfbR">
    <location>
        <begin position="1"/>
        <end position="199"/>
    </location>
</feature>
<feature type="domain" description="HD" evidence="2">
    <location>
        <begin position="30"/>
        <end position="142"/>
    </location>
</feature>
<feature type="binding site" evidence="1">
    <location>
        <begin position="18"/>
        <end position="19"/>
    </location>
    <ligand>
        <name>substrate</name>
    </ligand>
</feature>
<feature type="binding site" evidence="1">
    <location>
        <position position="33"/>
    </location>
    <ligand>
        <name>a divalent metal cation</name>
        <dbReference type="ChEBI" id="CHEBI:60240"/>
    </ligand>
</feature>
<feature type="binding site" evidence="1">
    <location>
        <position position="33"/>
    </location>
    <ligand>
        <name>substrate</name>
    </ligand>
</feature>
<feature type="binding site" evidence="1">
    <location>
        <position position="68"/>
    </location>
    <ligand>
        <name>a divalent metal cation</name>
        <dbReference type="ChEBI" id="CHEBI:60240"/>
    </ligand>
</feature>
<feature type="binding site" evidence="1">
    <location>
        <position position="69"/>
    </location>
    <ligand>
        <name>a divalent metal cation</name>
        <dbReference type="ChEBI" id="CHEBI:60240"/>
    </ligand>
</feature>
<feature type="binding site" evidence="1">
    <location>
        <position position="69"/>
    </location>
    <ligand>
        <name>substrate</name>
    </ligand>
</feature>
<feature type="binding site" evidence="1">
    <location>
        <begin position="77"/>
        <end position="80"/>
    </location>
    <ligand>
        <name>substrate</name>
    </ligand>
</feature>
<feature type="binding site" evidence="1">
    <location>
        <position position="137"/>
    </location>
    <ligand>
        <name>a divalent metal cation</name>
        <dbReference type="ChEBI" id="CHEBI:60240"/>
    </ligand>
</feature>
<feature type="binding site" evidence="1">
    <location>
        <position position="137"/>
    </location>
    <ligand>
        <name>substrate</name>
    </ligand>
</feature>
<feature type="site" description="Appears to be important in orienting the phosphate for catalysis" evidence="1">
    <location>
        <position position="18"/>
    </location>
</feature>